<gene>
    <name evidence="1" type="primary">nfo</name>
    <name type="ordered locus">ABC1698</name>
</gene>
<proteinExistence type="inferred from homology"/>
<accession>Q5WHC2</accession>
<organism>
    <name type="scientific">Shouchella clausii (strain KSM-K16)</name>
    <name type="common">Alkalihalobacillus clausii</name>
    <dbReference type="NCBI Taxonomy" id="66692"/>
    <lineage>
        <taxon>Bacteria</taxon>
        <taxon>Bacillati</taxon>
        <taxon>Bacillota</taxon>
        <taxon>Bacilli</taxon>
        <taxon>Bacillales</taxon>
        <taxon>Bacillaceae</taxon>
        <taxon>Shouchella</taxon>
    </lineage>
</organism>
<dbReference type="EC" id="3.1.21.2" evidence="1"/>
<dbReference type="EMBL" id="AP006627">
    <property type="protein sequence ID" value="BAD64233.1"/>
    <property type="molecule type" value="Genomic_DNA"/>
</dbReference>
<dbReference type="RefSeq" id="WP_011246542.1">
    <property type="nucleotide sequence ID" value="NC_006582.1"/>
</dbReference>
<dbReference type="SMR" id="Q5WHC2"/>
<dbReference type="STRING" id="66692.ABC1698"/>
<dbReference type="KEGG" id="bcl:ABC1698"/>
<dbReference type="eggNOG" id="COG0648">
    <property type="taxonomic scope" value="Bacteria"/>
</dbReference>
<dbReference type="HOGENOM" id="CLU_025885_4_1_9"/>
<dbReference type="OrthoDB" id="9805666at2"/>
<dbReference type="Proteomes" id="UP000001168">
    <property type="component" value="Chromosome"/>
</dbReference>
<dbReference type="GO" id="GO:0008833">
    <property type="term" value="F:deoxyribonuclease IV (phage-T4-induced) activity"/>
    <property type="evidence" value="ECO:0007669"/>
    <property type="project" value="UniProtKB-UniRule"/>
</dbReference>
<dbReference type="GO" id="GO:0003677">
    <property type="term" value="F:DNA binding"/>
    <property type="evidence" value="ECO:0007669"/>
    <property type="project" value="InterPro"/>
</dbReference>
<dbReference type="GO" id="GO:0003906">
    <property type="term" value="F:DNA-(apurinic or apyrimidinic site) endonuclease activity"/>
    <property type="evidence" value="ECO:0007669"/>
    <property type="project" value="TreeGrafter"/>
</dbReference>
<dbReference type="GO" id="GO:0008081">
    <property type="term" value="F:phosphoric diester hydrolase activity"/>
    <property type="evidence" value="ECO:0007669"/>
    <property type="project" value="TreeGrafter"/>
</dbReference>
<dbReference type="GO" id="GO:0008270">
    <property type="term" value="F:zinc ion binding"/>
    <property type="evidence" value="ECO:0007669"/>
    <property type="project" value="UniProtKB-UniRule"/>
</dbReference>
<dbReference type="GO" id="GO:0006284">
    <property type="term" value="P:base-excision repair"/>
    <property type="evidence" value="ECO:0007669"/>
    <property type="project" value="TreeGrafter"/>
</dbReference>
<dbReference type="CDD" id="cd00019">
    <property type="entry name" value="AP2Ec"/>
    <property type="match status" value="1"/>
</dbReference>
<dbReference type="FunFam" id="3.20.20.150:FF:000001">
    <property type="entry name" value="Probable endonuclease 4"/>
    <property type="match status" value="1"/>
</dbReference>
<dbReference type="Gene3D" id="3.20.20.150">
    <property type="entry name" value="Divalent-metal-dependent TIM barrel enzymes"/>
    <property type="match status" value="1"/>
</dbReference>
<dbReference type="HAMAP" id="MF_00152">
    <property type="entry name" value="Nfo"/>
    <property type="match status" value="1"/>
</dbReference>
<dbReference type="InterPro" id="IPR001719">
    <property type="entry name" value="AP_endonuc_2"/>
</dbReference>
<dbReference type="InterPro" id="IPR018246">
    <property type="entry name" value="AP_endonuc_F2_Zn_BS"/>
</dbReference>
<dbReference type="InterPro" id="IPR036237">
    <property type="entry name" value="Xyl_isomerase-like_sf"/>
</dbReference>
<dbReference type="InterPro" id="IPR013022">
    <property type="entry name" value="Xyl_isomerase-like_TIM-brl"/>
</dbReference>
<dbReference type="NCBIfam" id="TIGR00587">
    <property type="entry name" value="nfo"/>
    <property type="match status" value="1"/>
</dbReference>
<dbReference type="NCBIfam" id="NF002196">
    <property type="entry name" value="PRK01060.1-1"/>
    <property type="match status" value="1"/>
</dbReference>
<dbReference type="PANTHER" id="PTHR21445:SF0">
    <property type="entry name" value="APURINIC-APYRIMIDINIC ENDONUCLEASE"/>
    <property type="match status" value="1"/>
</dbReference>
<dbReference type="PANTHER" id="PTHR21445">
    <property type="entry name" value="ENDONUCLEASE IV ENDODEOXYRIBONUCLEASE IV"/>
    <property type="match status" value="1"/>
</dbReference>
<dbReference type="Pfam" id="PF01261">
    <property type="entry name" value="AP_endonuc_2"/>
    <property type="match status" value="1"/>
</dbReference>
<dbReference type="SMART" id="SM00518">
    <property type="entry name" value="AP2Ec"/>
    <property type="match status" value="1"/>
</dbReference>
<dbReference type="SUPFAM" id="SSF51658">
    <property type="entry name" value="Xylose isomerase-like"/>
    <property type="match status" value="1"/>
</dbReference>
<dbReference type="PROSITE" id="PS00729">
    <property type="entry name" value="AP_NUCLEASE_F2_1"/>
    <property type="match status" value="1"/>
</dbReference>
<dbReference type="PROSITE" id="PS00730">
    <property type="entry name" value="AP_NUCLEASE_F2_2"/>
    <property type="match status" value="1"/>
</dbReference>
<dbReference type="PROSITE" id="PS51432">
    <property type="entry name" value="AP_NUCLEASE_F2_4"/>
    <property type="match status" value="1"/>
</dbReference>
<comment type="function">
    <text evidence="1">Endonuclease IV plays a role in DNA repair. It cleaves phosphodiester bonds at apurinic or apyrimidinic (AP) sites, generating a 3'-hydroxyl group and a 5'-terminal sugar phosphate.</text>
</comment>
<comment type="catalytic activity">
    <reaction evidence="1">
        <text>Endonucleolytic cleavage to 5'-phosphooligonucleotide end-products.</text>
        <dbReference type="EC" id="3.1.21.2"/>
    </reaction>
</comment>
<comment type="cofactor">
    <cofactor evidence="1">
        <name>Zn(2+)</name>
        <dbReference type="ChEBI" id="CHEBI:29105"/>
    </cofactor>
    <text evidence="1">Binds 3 Zn(2+) ions.</text>
</comment>
<comment type="similarity">
    <text evidence="1">Belongs to the AP endonuclease 2 family.</text>
</comment>
<reference key="1">
    <citation type="submission" date="2003-10" db="EMBL/GenBank/DDBJ databases">
        <title>The complete genome sequence of the alkaliphilic Bacillus clausii KSM-K16.</title>
        <authorList>
            <person name="Takaki Y."/>
            <person name="Kageyama Y."/>
            <person name="Shimamura S."/>
            <person name="Suzuki H."/>
            <person name="Nishi S."/>
            <person name="Hatada Y."/>
            <person name="Kawai S."/>
            <person name="Ito S."/>
            <person name="Horikoshi K."/>
        </authorList>
    </citation>
    <scope>NUCLEOTIDE SEQUENCE [LARGE SCALE GENOMIC DNA]</scope>
    <source>
        <strain>KSM-K16</strain>
    </source>
</reference>
<protein>
    <recommendedName>
        <fullName evidence="1">Probable endonuclease 4</fullName>
        <ecNumber evidence="1">3.1.21.2</ecNumber>
    </recommendedName>
    <alternativeName>
        <fullName evidence="1">Endodeoxyribonuclease IV</fullName>
    </alternativeName>
    <alternativeName>
        <fullName evidence="1">Endonuclease IV</fullName>
    </alternativeName>
</protein>
<evidence type="ECO:0000255" key="1">
    <source>
        <dbReference type="HAMAP-Rule" id="MF_00152"/>
    </source>
</evidence>
<sequence>MSLLIGSHVSMSGKKMLLQSSEEAASYGATTFMIYTGAPQNTRRKAIEDLNIEAGKAHMAEHGLSNIVVHAPYIINIGNTQKPETFRLGVDFLRSEIERTEAIGAKQIVLHPGAHVGAGAEEGIKKIIEGLNEVLTEKRDVQIALETMAGKGSECGCTFEELAKIIDGVTHNERLSVCFDTCHTHDAGYDIVNDFDGVLDEFDRIIGAERIKVVHINDSKNERSARKDRHENIGHGHIGLKALDYIVHHDQFKDIPKILETPFIGKDKKDKRPPYKHEIALLRRELLEPIEK</sequence>
<name>END4_SHOC1</name>
<feature type="chain" id="PRO_0000190824" description="Probable endonuclease 4">
    <location>
        <begin position="1"/>
        <end position="292"/>
    </location>
</feature>
<feature type="binding site" evidence="1">
    <location>
        <position position="70"/>
    </location>
    <ligand>
        <name>Zn(2+)</name>
        <dbReference type="ChEBI" id="CHEBI:29105"/>
        <label>1</label>
    </ligand>
</feature>
<feature type="binding site" evidence="1">
    <location>
        <position position="111"/>
    </location>
    <ligand>
        <name>Zn(2+)</name>
        <dbReference type="ChEBI" id="CHEBI:29105"/>
        <label>1</label>
    </ligand>
</feature>
<feature type="binding site" evidence="1">
    <location>
        <position position="146"/>
    </location>
    <ligand>
        <name>Zn(2+)</name>
        <dbReference type="ChEBI" id="CHEBI:29105"/>
        <label>1</label>
    </ligand>
</feature>
<feature type="binding site" evidence="1">
    <location>
        <position position="146"/>
    </location>
    <ligand>
        <name>Zn(2+)</name>
        <dbReference type="ChEBI" id="CHEBI:29105"/>
        <label>2</label>
    </ligand>
</feature>
<feature type="binding site" evidence="1">
    <location>
        <position position="180"/>
    </location>
    <ligand>
        <name>Zn(2+)</name>
        <dbReference type="ChEBI" id="CHEBI:29105"/>
        <label>2</label>
    </ligand>
</feature>
<feature type="binding site" evidence="1">
    <location>
        <position position="183"/>
    </location>
    <ligand>
        <name>Zn(2+)</name>
        <dbReference type="ChEBI" id="CHEBI:29105"/>
        <label>3</label>
    </ligand>
</feature>
<feature type="binding site" evidence="1">
    <location>
        <position position="215"/>
    </location>
    <ligand>
        <name>Zn(2+)</name>
        <dbReference type="ChEBI" id="CHEBI:29105"/>
        <label>2</label>
    </ligand>
</feature>
<feature type="binding site" evidence="1">
    <location>
        <position position="228"/>
    </location>
    <ligand>
        <name>Zn(2+)</name>
        <dbReference type="ChEBI" id="CHEBI:29105"/>
        <label>3</label>
    </ligand>
</feature>
<feature type="binding site" evidence="1">
    <location>
        <position position="230"/>
    </location>
    <ligand>
        <name>Zn(2+)</name>
        <dbReference type="ChEBI" id="CHEBI:29105"/>
        <label>3</label>
    </ligand>
</feature>
<feature type="binding site" evidence="1">
    <location>
        <position position="260"/>
    </location>
    <ligand>
        <name>Zn(2+)</name>
        <dbReference type="ChEBI" id="CHEBI:29105"/>
        <label>2</label>
    </ligand>
</feature>
<keyword id="KW-0227">DNA damage</keyword>
<keyword id="KW-0234">DNA repair</keyword>
<keyword id="KW-0255">Endonuclease</keyword>
<keyword id="KW-0378">Hydrolase</keyword>
<keyword id="KW-0479">Metal-binding</keyword>
<keyword id="KW-0540">Nuclease</keyword>
<keyword id="KW-1185">Reference proteome</keyword>
<keyword id="KW-0862">Zinc</keyword>